<accession>O17919</accession>
<proteinExistence type="inferred from homology"/>
<reference key="1">
    <citation type="journal article" date="1998" name="Science">
        <title>Genome sequence of the nematode C. elegans: a platform for investigating biology.</title>
        <authorList>
            <consortium name="The C. elegans sequencing consortium"/>
        </authorList>
    </citation>
    <scope>NUCLEOTIDE SEQUENCE [LARGE SCALE GENOMIC DNA]</scope>
    <source>
        <strain>Bristol N2</strain>
    </source>
</reference>
<evidence type="ECO:0000250" key="1"/>
<evidence type="ECO:0000255" key="2">
    <source>
        <dbReference type="PROSITE-ProRule" id="PRU00161"/>
    </source>
</evidence>
<evidence type="ECO:0000256" key="3">
    <source>
        <dbReference type="SAM" id="MobiDB-lite"/>
    </source>
</evidence>
<evidence type="ECO:0000305" key="4"/>
<evidence type="ECO:0000312" key="5">
    <source>
        <dbReference type="WormBase" id="K01G5.5"/>
    </source>
</evidence>
<gene>
    <name evidence="5" type="primary">dkc-1</name>
    <name type="ORF">K01G5.5</name>
</gene>
<protein>
    <recommendedName>
        <fullName>Putative H/ACA ribonucleoprotein complex subunit 4</fullName>
        <ecNumber>5.4.99.-</ecNumber>
    </recommendedName>
</protein>
<comment type="function">
    <text evidence="1">Plays a central role in ribosomal RNA processing. Probable catalytic subunit of H/ACA small nucleolar ribonucleoprotein (H/ACA snoRNP) complex, which catalyzes pseudouridylation of rRNA. This involves the isomerization of uridine such that the ribose is subsequently attached to C5, instead of the normal N1. Pseudouridine ('psi') residues may serve to stabilize the conformation of rRNAs (By similarity).</text>
</comment>
<comment type="catalytic activity">
    <reaction>
        <text>a uridine in RNA = a pseudouridine in RNA</text>
        <dbReference type="Rhea" id="RHEA:48348"/>
        <dbReference type="Rhea" id="RHEA-COMP:12068"/>
        <dbReference type="Rhea" id="RHEA-COMP:12069"/>
        <dbReference type="ChEBI" id="CHEBI:65314"/>
        <dbReference type="ChEBI" id="CHEBI:65315"/>
    </reaction>
</comment>
<comment type="subunit">
    <text evidence="1">Component of the small nucleolar ribonucleoprotein particle containing H/ACA-type snoRNAs (H/ACA snoRNPs).</text>
</comment>
<comment type="subcellular location">
    <subcellularLocation>
        <location evidence="1">Nucleus</location>
        <location evidence="1">Nucleolus</location>
    </subcellularLocation>
</comment>
<comment type="similarity">
    <text evidence="4">Belongs to the pseudouridine synthase TruB family.</text>
</comment>
<keyword id="KW-0413">Isomerase</keyword>
<keyword id="KW-0539">Nucleus</keyword>
<keyword id="KW-1185">Reference proteome</keyword>
<keyword id="KW-0687">Ribonucleoprotein</keyword>
<keyword id="KW-0690">Ribosome biogenesis</keyword>
<keyword id="KW-0694">RNA-binding</keyword>
<keyword id="KW-0698">rRNA processing</keyword>
<dbReference type="EC" id="5.4.99.-"/>
<dbReference type="EMBL" id="Z92803">
    <property type="protein sequence ID" value="CAB07244.1"/>
    <property type="molecule type" value="Genomic_DNA"/>
</dbReference>
<dbReference type="PIR" id="T23199">
    <property type="entry name" value="T23199"/>
</dbReference>
<dbReference type="RefSeq" id="NP_499370.1">
    <property type="nucleotide sequence ID" value="NM_066969.7"/>
</dbReference>
<dbReference type="SMR" id="O17919"/>
<dbReference type="BioGRID" id="41691">
    <property type="interactions" value="36"/>
</dbReference>
<dbReference type="DIP" id="DIP-25862N"/>
<dbReference type="FunCoup" id="O17919">
    <property type="interactions" value="2672"/>
</dbReference>
<dbReference type="IntAct" id="O17919">
    <property type="interactions" value="1"/>
</dbReference>
<dbReference type="STRING" id="6239.K01G5.5.1"/>
<dbReference type="iPTMnet" id="O17919"/>
<dbReference type="PaxDb" id="6239-K01G5.5"/>
<dbReference type="PeptideAtlas" id="O17919"/>
<dbReference type="EnsemblMetazoa" id="K01G5.5.1">
    <property type="protein sequence ID" value="K01G5.5.1"/>
    <property type="gene ID" value="WBGene00010478"/>
</dbReference>
<dbReference type="GeneID" id="176504"/>
<dbReference type="KEGG" id="cel:CELE_K01G5.5"/>
<dbReference type="UCSC" id="K01G5.5.1">
    <property type="organism name" value="c. elegans"/>
</dbReference>
<dbReference type="AGR" id="WB:WBGene00010478"/>
<dbReference type="CTD" id="176504"/>
<dbReference type="WormBase" id="K01G5.5">
    <property type="protein sequence ID" value="CE16195"/>
    <property type="gene ID" value="WBGene00010478"/>
    <property type="gene designation" value="dkc-1"/>
</dbReference>
<dbReference type="eggNOG" id="KOG2529">
    <property type="taxonomic scope" value="Eukaryota"/>
</dbReference>
<dbReference type="GeneTree" id="ENSGT00510000047092"/>
<dbReference type="HOGENOM" id="CLU_032087_3_2_1"/>
<dbReference type="InParanoid" id="O17919"/>
<dbReference type="OMA" id="KYGRTNE"/>
<dbReference type="OrthoDB" id="10250002at2759"/>
<dbReference type="PhylomeDB" id="O17919"/>
<dbReference type="Reactome" id="R-CEL-171319">
    <property type="pathway name" value="Telomere Extension By Telomerase"/>
</dbReference>
<dbReference type="PRO" id="PR:O17919"/>
<dbReference type="Proteomes" id="UP000001940">
    <property type="component" value="Chromosome III"/>
</dbReference>
<dbReference type="Bgee" id="WBGene00010478">
    <property type="expression patterns" value="Expressed in germ line (C elegans) and 4 other cell types or tissues"/>
</dbReference>
<dbReference type="GO" id="GO:0031429">
    <property type="term" value="C:box H/ACA snoRNP complex"/>
    <property type="evidence" value="ECO:0000318"/>
    <property type="project" value="GO_Central"/>
</dbReference>
<dbReference type="GO" id="GO:0009982">
    <property type="term" value="F:pseudouridine synthase activity"/>
    <property type="evidence" value="ECO:0000318"/>
    <property type="project" value="GO_Central"/>
</dbReference>
<dbReference type="GO" id="GO:0003723">
    <property type="term" value="F:RNA binding"/>
    <property type="evidence" value="ECO:0007669"/>
    <property type="project" value="UniProtKB-KW"/>
</dbReference>
<dbReference type="GO" id="GO:0000495">
    <property type="term" value="P:box H/ACA sno(s)RNA 3'-end processing"/>
    <property type="evidence" value="ECO:0000318"/>
    <property type="project" value="GO_Central"/>
</dbReference>
<dbReference type="GO" id="GO:1990481">
    <property type="term" value="P:mRNA pseudouridine synthesis"/>
    <property type="evidence" value="ECO:0000318"/>
    <property type="project" value="GO_Central"/>
</dbReference>
<dbReference type="GO" id="GO:0031118">
    <property type="term" value="P:rRNA pseudouridine synthesis"/>
    <property type="evidence" value="ECO:0000318"/>
    <property type="project" value="GO_Central"/>
</dbReference>
<dbReference type="GO" id="GO:0031120">
    <property type="term" value="P:snRNA pseudouridine synthesis"/>
    <property type="evidence" value="ECO:0000318"/>
    <property type="project" value="GO_Central"/>
</dbReference>
<dbReference type="CDD" id="cd02572">
    <property type="entry name" value="PseudoU_synth_hDyskerin"/>
    <property type="match status" value="1"/>
</dbReference>
<dbReference type="CDD" id="cd21148">
    <property type="entry name" value="PUA_Cbf5"/>
    <property type="match status" value="1"/>
</dbReference>
<dbReference type="FunFam" id="3.30.2350.10:FF:000001">
    <property type="entry name" value="H/ACA ribonucleoprotein complex subunit CBF5"/>
    <property type="match status" value="1"/>
</dbReference>
<dbReference type="Gene3D" id="3.30.2350.10">
    <property type="entry name" value="Pseudouridine synthase"/>
    <property type="match status" value="1"/>
</dbReference>
<dbReference type="Gene3D" id="2.30.130.10">
    <property type="entry name" value="PUA domain"/>
    <property type="match status" value="1"/>
</dbReference>
<dbReference type="InterPro" id="IPR012960">
    <property type="entry name" value="Dyskerin-like"/>
</dbReference>
<dbReference type="InterPro" id="IPR020103">
    <property type="entry name" value="PsdUridine_synth_cat_dom_sf"/>
</dbReference>
<dbReference type="InterPro" id="IPR002501">
    <property type="entry name" value="PsdUridine_synth_N"/>
</dbReference>
<dbReference type="InterPro" id="IPR002478">
    <property type="entry name" value="PUA"/>
</dbReference>
<dbReference type="InterPro" id="IPR015947">
    <property type="entry name" value="PUA-like_sf"/>
</dbReference>
<dbReference type="InterPro" id="IPR036974">
    <property type="entry name" value="PUA_sf"/>
</dbReference>
<dbReference type="InterPro" id="IPR004802">
    <property type="entry name" value="tRNA_PsdUridine_synth_B_fam"/>
</dbReference>
<dbReference type="InterPro" id="IPR032819">
    <property type="entry name" value="TruB_C"/>
</dbReference>
<dbReference type="InterPro" id="IPR004521">
    <property type="entry name" value="Uncharacterised_CHP00451"/>
</dbReference>
<dbReference type="NCBIfam" id="TIGR00425">
    <property type="entry name" value="CBF5"/>
    <property type="match status" value="1"/>
</dbReference>
<dbReference type="NCBIfam" id="NF003280">
    <property type="entry name" value="PRK04270.1"/>
    <property type="match status" value="1"/>
</dbReference>
<dbReference type="NCBIfam" id="TIGR00451">
    <property type="entry name" value="unchar_dom_2"/>
    <property type="match status" value="1"/>
</dbReference>
<dbReference type="PANTHER" id="PTHR23127">
    <property type="entry name" value="CENTROMERE/MICROTUBULE BINDING PROTEIN CBF5"/>
    <property type="match status" value="1"/>
</dbReference>
<dbReference type="PANTHER" id="PTHR23127:SF0">
    <property type="entry name" value="H_ACA RIBONUCLEOPROTEIN COMPLEX SUBUNIT DKC1"/>
    <property type="match status" value="1"/>
</dbReference>
<dbReference type="Pfam" id="PF08068">
    <property type="entry name" value="DKCLD"/>
    <property type="match status" value="1"/>
</dbReference>
<dbReference type="Pfam" id="PF01472">
    <property type="entry name" value="PUA"/>
    <property type="match status" value="1"/>
</dbReference>
<dbReference type="Pfam" id="PF16198">
    <property type="entry name" value="TruB_C_2"/>
    <property type="match status" value="1"/>
</dbReference>
<dbReference type="Pfam" id="PF01509">
    <property type="entry name" value="TruB_N"/>
    <property type="match status" value="1"/>
</dbReference>
<dbReference type="SMART" id="SM01136">
    <property type="entry name" value="DKCLD"/>
    <property type="match status" value="1"/>
</dbReference>
<dbReference type="SMART" id="SM00359">
    <property type="entry name" value="PUA"/>
    <property type="match status" value="1"/>
</dbReference>
<dbReference type="SUPFAM" id="SSF55120">
    <property type="entry name" value="Pseudouridine synthase"/>
    <property type="match status" value="1"/>
</dbReference>
<dbReference type="SUPFAM" id="SSF88697">
    <property type="entry name" value="PUA domain-like"/>
    <property type="match status" value="1"/>
</dbReference>
<dbReference type="PROSITE" id="PS50890">
    <property type="entry name" value="PUA"/>
    <property type="match status" value="1"/>
</dbReference>
<organism>
    <name type="scientific">Caenorhabditis elegans</name>
    <dbReference type="NCBI Taxonomy" id="6239"/>
    <lineage>
        <taxon>Eukaryota</taxon>
        <taxon>Metazoa</taxon>
        <taxon>Ecdysozoa</taxon>
        <taxon>Nematoda</taxon>
        <taxon>Chromadorea</taxon>
        <taxon>Rhabditida</taxon>
        <taxon>Rhabditina</taxon>
        <taxon>Rhabditomorpha</taxon>
        <taxon>Rhabditoidea</taxon>
        <taxon>Rhabditidae</taxon>
        <taxon>Peloderinae</taxon>
        <taxon>Caenorhabditis</taxon>
    </lineage>
</organism>
<name>DKC1_CAEEL</name>
<feature type="chain" id="PRO_0000121988" description="Putative H/ACA ribonucleoprotein complex subunit 4">
    <location>
        <begin position="1"/>
        <end position="445"/>
    </location>
</feature>
<feature type="domain" description="PUA" evidence="2">
    <location>
        <begin position="284"/>
        <end position="359"/>
    </location>
</feature>
<feature type="region of interest" description="Disordered" evidence="3">
    <location>
        <begin position="1"/>
        <end position="32"/>
    </location>
</feature>
<feature type="region of interest" description="Disordered" evidence="3">
    <location>
        <begin position="386"/>
        <end position="445"/>
    </location>
</feature>
<feature type="compositionally biased region" description="Polar residues" evidence="3">
    <location>
        <begin position="20"/>
        <end position="32"/>
    </location>
</feature>
<feature type="active site" description="Nucleophile" evidence="1">
    <location>
        <position position="113"/>
    </location>
</feature>
<sequence>MGKKDKRSKLEGDDLAEAQQKGSFQLPSSNETAKLDASQWPLLLKNYDKLNVRTNHYTPHVEGVSPLKRDIKNYISSGFFNLDKPSNPSSHEVVSWIKRILRCEKTGHSGTLDPKVSGCLIVCIDRTTRLAKSQQGAGKEYICIFKLHEEVEDDRKVKQALEKLTGALFQRPPLISAVKRQLRIRTVYENKFIEYDPAQQMGIFNCICESGTYVRTICVHLGLILGCGGQMQELRRNRSGICDENENMVTMHDVLDAQYLLDTQKDESYMRHIVRPLEALLTQHKRVVVKDSCINAICYGAKILIPGILRYDDDIEVGKEIVIMSTKGEAICIAIAQMNTSTIASVDHGVVAKSKRVIMERDVYGRKWGLGPVASKKKQMVKDGLLDKFGKPNDTTPKSWAKEYVQTSTKKEVKKEETPDEEEEEAPKKKSKKSKKQESSDSDSD</sequence>